<name>DUT_FRATM</name>
<dbReference type="EC" id="3.6.1.23" evidence="1"/>
<dbReference type="EMBL" id="CP000915">
    <property type="protein sequence ID" value="ACD31355.1"/>
    <property type="molecule type" value="Genomic_DNA"/>
</dbReference>
<dbReference type="SMR" id="B2SDZ1"/>
<dbReference type="KEGG" id="ftm:FTM_1533"/>
<dbReference type="HOGENOM" id="CLU_068508_1_1_6"/>
<dbReference type="UniPathway" id="UPA00610">
    <property type="reaction ID" value="UER00666"/>
</dbReference>
<dbReference type="GO" id="GO:0004170">
    <property type="term" value="F:dUTP diphosphatase activity"/>
    <property type="evidence" value="ECO:0007669"/>
    <property type="project" value="UniProtKB-UniRule"/>
</dbReference>
<dbReference type="GO" id="GO:0000287">
    <property type="term" value="F:magnesium ion binding"/>
    <property type="evidence" value="ECO:0007669"/>
    <property type="project" value="UniProtKB-UniRule"/>
</dbReference>
<dbReference type="GO" id="GO:0006226">
    <property type="term" value="P:dUMP biosynthetic process"/>
    <property type="evidence" value="ECO:0007669"/>
    <property type="project" value="UniProtKB-UniRule"/>
</dbReference>
<dbReference type="GO" id="GO:0046081">
    <property type="term" value="P:dUTP catabolic process"/>
    <property type="evidence" value="ECO:0007669"/>
    <property type="project" value="InterPro"/>
</dbReference>
<dbReference type="CDD" id="cd07557">
    <property type="entry name" value="trimeric_dUTPase"/>
    <property type="match status" value="1"/>
</dbReference>
<dbReference type="FunFam" id="2.70.40.10:FF:000002">
    <property type="entry name" value="dUTP diphosphatase"/>
    <property type="match status" value="1"/>
</dbReference>
<dbReference type="Gene3D" id="2.70.40.10">
    <property type="match status" value="1"/>
</dbReference>
<dbReference type="HAMAP" id="MF_00116">
    <property type="entry name" value="dUTPase_bact"/>
    <property type="match status" value="1"/>
</dbReference>
<dbReference type="InterPro" id="IPR008181">
    <property type="entry name" value="dUTPase"/>
</dbReference>
<dbReference type="InterPro" id="IPR029054">
    <property type="entry name" value="dUTPase-like"/>
</dbReference>
<dbReference type="InterPro" id="IPR036157">
    <property type="entry name" value="dUTPase-like_sf"/>
</dbReference>
<dbReference type="InterPro" id="IPR033704">
    <property type="entry name" value="dUTPase_trimeric"/>
</dbReference>
<dbReference type="NCBIfam" id="TIGR00576">
    <property type="entry name" value="dut"/>
    <property type="match status" value="1"/>
</dbReference>
<dbReference type="NCBIfam" id="NF001862">
    <property type="entry name" value="PRK00601.1"/>
    <property type="match status" value="1"/>
</dbReference>
<dbReference type="PANTHER" id="PTHR11241">
    <property type="entry name" value="DEOXYURIDINE 5'-TRIPHOSPHATE NUCLEOTIDOHYDROLASE"/>
    <property type="match status" value="1"/>
</dbReference>
<dbReference type="PANTHER" id="PTHR11241:SF0">
    <property type="entry name" value="DEOXYURIDINE 5'-TRIPHOSPHATE NUCLEOTIDOHYDROLASE"/>
    <property type="match status" value="1"/>
</dbReference>
<dbReference type="Pfam" id="PF00692">
    <property type="entry name" value="dUTPase"/>
    <property type="match status" value="1"/>
</dbReference>
<dbReference type="SUPFAM" id="SSF51283">
    <property type="entry name" value="dUTPase-like"/>
    <property type="match status" value="1"/>
</dbReference>
<proteinExistence type="inferred from homology"/>
<reference key="1">
    <citation type="journal article" date="2009" name="PLoS Pathog.">
        <title>Molecular evolutionary consequences of niche restriction in Francisella tularensis, a facultative intracellular pathogen.</title>
        <authorList>
            <person name="Larsson P."/>
            <person name="Elfsmark D."/>
            <person name="Svensson K."/>
            <person name="Wikstroem P."/>
            <person name="Forsman M."/>
            <person name="Brettin T."/>
            <person name="Keim P."/>
            <person name="Johansson A."/>
        </authorList>
    </citation>
    <scope>NUCLEOTIDE SEQUENCE [LARGE SCALE GENOMIC DNA]</scope>
    <source>
        <strain>FSC147</strain>
    </source>
</reference>
<protein>
    <recommendedName>
        <fullName evidence="1">Deoxyuridine 5'-triphosphate nucleotidohydrolase</fullName>
        <shortName evidence="1">dUTPase</shortName>
        <ecNumber evidence="1">3.6.1.23</ecNumber>
    </recommendedName>
    <alternativeName>
        <fullName evidence="1">dUTP pyrophosphatase</fullName>
    </alternativeName>
</protein>
<gene>
    <name evidence="1" type="primary">dut</name>
    <name type="ordered locus">FTM_1533</name>
</gene>
<organism>
    <name type="scientific">Francisella tularensis subsp. mediasiatica (strain FSC147)</name>
    <dbReference type="NCBI Taxonomy" id="441952"/>
    <lineage>
        <taxon>Bacteria</taxon>
        <taxon>Pseudomonadati</taxon>
        <taxon>Pseudomonadota</taxon>
        <taxon>Gammaproteobacteria</taxon>
        <taxon>Thiotrichales</taxon>
        <taxon>Francisellaceae</taxon>
        <taxon>Francisella</taxon>
    </lineage>
</organism>
<accession>B2SDZ1</accession>
<evidence type="ECO:0000255" key="1">
    <source>
        <dbReference type="HAMAP-Rule" id="MF_00116"/>
    </source>
</evidence>
<feature type="chain" id="PRO_1000094964" description="Deoxyuridine 5'-triphosphate nucleotidohydrolase">
    <location>
        <begin position="1"/>
        <end position="148"/>
    </location>
</feature>
<feature type="binding site" evidence="1">
    <location>
        <begin position="67"/>
        <end position="69"/>
    </location>
    <ligand>
        <name>substrate</name>
    </ligand>
</feature>
<feature type="binding site" evidence="1">
    <location>
        <position position="80"/>
    </location>
    <ligand>
        <name>substrate</name>
    </ligand>
</feature>
<feature type="binding site" evidence="1">
    <location>
        <begin position="84"/>
        <end position="86"/>
    </location>
    <ligand>
        <name>substrate</name>
    </ligand>
</feature>
<feature type="binding site" evidence="1">
    <location>
        <position position="94"/>
    </location>
    <ligand>
        <name>substrate</name>
    </ligand>
</feature>
<sequence>MKVELKILNKELIKELPGYATEGSAAIDLRACISESIYLKSGECKLVATGIAINIANPNYAAMILPRSGLGHKKGLVLGNGTGLIDSDYQGELMVSCFNRSQETIEIEPLMRFAQLVIVPVVQANFEIVEDFSQQSVRATGGFGHTGV</sequence>
<keyword id="KW-0378">Hydrolase</keyword>
<keyword id="KW-0460">Magnesium</keyword>
<keyword id="KW-0479">Metal-binding</keyword>
<keyword id="KW-0546">Nucleotide metabolism</keyword>
<comment type="function">
    <text evidence="1">This enzyme is involved in nucleotide metabolism: it produces dUMP, the immediate precursor of thymidine nucleotides and it decreases the intracellular concentration of dUTP so that uracil cannot be incorporated into DNA.</text>
</comment>
<comment type="catalytic activity">
    <reaction evidence="1">
        <text>dUTP + H2O = dUMP + diphosphate + H(+)</text>
        <dbReference type="Rhea" id="RHEA:10248"/>
        <dbReference type="ChEBI" id="CHEBI:15377"/>
        <dbReference type="ChEBI" id="CHEBI:15378"/>
        <dbReference type="ChEBI" id="CHEBI:33019"/>
        <dbReference type="ChEBI" id="CHEBI:61555"/>
        <dbReference type="ChEBI" id="CHEBI:246422"/>
        <dbReference type="EC" id="3.6.1.23"/>
    </reaction>
</comment>
<comment type="cofactor">
    <cofactor evidence="1">
        <name>Mg(2+)</name>
        <dbReference type="ChEBI" id="CHEBI:18420"/>
    </cofactor>
</comment>
<comment type="pathway">
    <text evidence="1">Pyrimidine metabolism; dUMP biosynthesis; dUMP from dCTP (dUTP route): step 2/2.</text>
</comment>
<comment type="similarity">
    <text evidence="1">Belongs to the dUTPase family.</text>
</comment>